<dbReference type="EC" id="2.7.11.22"/>
<dbReference type="EC" id="2.7.11.23"/>
<dbReference type="EMBL" id="CH408033">
    <property type="protein sequence ID" value="EAQ85592.1"/>
    <property type="molecule type" value="Genomic_DNA"/>
</dbReference>
<dbReference type="RefSeq" id="XP_001224501.1">
    <property type="nucleotide sequence ID" value="XM_001224500.1"/>
</dbReference>
<dbReference type="SMR" id="Q2GYV9"/>
<dbReference type="FunCoup" id="Q2GYV9">
    <property type="interactions" value="920"/>
</dbReference>
<dbReference type="STRING" id="306901.Q2GYV9"/>
<dbReference type="GeneID" id="4394378"/>
<dbReference type="VEuPathDB" id="FungiDB:CHGG_06845"/>
<dbReference type="eggNOG" id="KOG0666">
    <property type="taxonomic scope" value="Eukaryota"/>
</dbReference>
<dbReference type="HOGENOM" id="CLU_000288_181_6_1"/>
<dbReference type="InParanoid" id="Q2GYV9"/>
<dbReference type="OMA" id="YFKNGGP"/>
<dbReference type="OrthoDB" id="6284126at2759"/>
<dbReference type="Proteomes" id="UP000001056">
    <property type="component" value="Unassembled WGS sequence"/>
</dbReference>
<dbReference type="GO" id="GO:1990508">
    <property type="term" value="C:CKM complex"/>
    <property type="evidence" value="ECO:0007669"/>
    <property type="project" value="EnsemblFungi"/>
</dbReference>
<dbReference type="GO" id="GO:0016592">
    <property type="term" value="C:mediator complex"/>
    <property type="evidence" value="ECO:0007669"/>
    <property type="project" value="EnsemblFungi"/>
</dbReference>
<dbReference type="GO" id="GO:0005524">
    <property type="term" value="F:ATP binding"/>
    <property type="evidence" value="ECO:0007669"/>
    <property type="project" value="UniProtKB-KW"/>
</dbReference>
<dbReference type="GO" id="GO:0004693">
    <property type="term" value="F:cyclin-dependent protein serine/threonine kinase activity"/>
    <property type="evidence" value="ECO:0007669"/>
    <property type="project" value="UniProtKB-EC"/>
</dbReference>
<dbReference type="GO" id="GO:0046872">
    <property type="term" value="F:metal ion binding"/>
    <property type="evidence" value="ECO:0007669"/>
    <property type="project" value="UniProtKB-KW"/>
</dbReference>
<dbReference type="GO" id="GO:0106310">
    <property type="term" value="F:protein serine kinase activity"/>
    <property type="evidence" value="ECO:0007669"/>
    <property type="project" value="RHEA"/>
</dbReference>
<dbReference type="GO" id="GO:0008353">
    <property type="term" value="F:RNA polymerase II CTD heptapeptide repeat kinase activity"/>
    <property type="evidence" value="ECO:0007669"/>
    <property type="project" value="UniProtKB-EC"/>
</dbReference>
<dbReference type="GO" id="GO:0060258">
    <property type="term" value="P:negative regulation of filamentous growth"/>
    <property type="evidence" value="ECO:0007669"/>
    <property type="project" value="EnsemblFungi"/>
</dbReference>
<dbReference type="GO" id="GO:0000122">
    <property type="term" value="P:negative regulation of transcription by RNA polymerase II"/>
    <property type="evidence" value="ECO:0007669"/>
    <property type="project" value="EnsemblFungi"/>
</dbReference>
<dbReference type="GO" id="GO:0070481">
    <property type="term" value="P:nuclear-transcribed mRNA catabolic process, non-stop decay"/>
    <property type="evidence" value="ECO:0007669"/>
    <property type="project" value="EnsemblFungi"/>
</dbReference>
<dbReference type="GO" id="GO:0045944">
    <property type="term" value="P:positive regulation of transcription by RNA polymerase II"/>
    <property type="evidence" value="ECO:0007669"/>
    <property type="project" value="EnsemblFungi"/>
</dbReference>
<dbReference type="GO" id="GO:0031648">
    <property type="term" value="P:protein destabilization"/>
    <property type="evidence" value="ECO:0007669"/>
    <property type="project" value="EnsemblFungi"/>
</dbReference>
<dbReference type="CDD" id="cd07842">
    <property type="entry name" value="STKc_CDK8_like"/>
    <property type="match status" value="1"/>
</dbReference>
<dbReference type="FunFam" id="1.10.510.10:FF:000408">
    <property type="entry name" value="Serine/threonine-protein kinase SSN3"/>
    <property type="match status" value="1"/>
</dbReference>
<dbReference type="FunFam" id="3.30.200.20:FF:000426">
    <property type="entry name" value="Serine/threonine-protein kinase ssn3"/>
    <property type="match status" value="1"/>
</dbReference>
<dbReference type="Gene3D" id="3.30.200.20">
    <property type="entry name" value="Phosphorylase Kinase, domain 1"/>
    <property type="match status" value="1"/>
</dbReference>
<dbReference type="Gene3D" id="1.10.510.10">
    <property type="entry name" value="Transferase(Phosphotransferase) domain 1"/>
    <property type="match status" value="1"/>
</dbReference>
<dbReference type="InterPro" id="IPR050108">
    <property type="entry name" value="CDK"/>
</dbReference>
<dbReference type="InterPro" id="IPR011009">
    <property type="entry name" value="Kinase-like_dom_sf"/>
</dbReference>
<dbReference type="InterPro" id="IPR000719">
    <property type="entry name" value="Prot_kinase_dom"/>
</dbReference>
<dbReference type="InterPro" id="IPR008271">
    <property type="entry name" value="Ser/Thr_kinase_AS"/>
</dbReference>
<dbReference type="PANTHER" id="PTHR24056">
    <property type="entry name" value="CELL DIVISION PROTEIN KINASE"/>
    <property type="match status" value="1"/>
</dbReference>
<dbReference type="PANTHER" id="PTHR24056:SF495">
    <property type="entry name" value="CYCLIN-DEPENDENT KINASE 8-RELATED"/>
    <property type="match status" value="1"/>
</dbReference>
<dbReference type="Pfam" id="PF00069">
    <property type="entry name" value="Pkinase"/>
    <property type="match status" value="1"/>
</dbReference>
<dbReference type="SMART" id="SM00220">
    <property type="entry name" value="S_TKc"/>
    <property type="match status" value="1"/>
</dbReference>
<dbReference type="SUPFAM" id="SSF56112">
    <property type="entry name" value="Protein kinase-like (PK-like)"/>
    <property type="match status" value="1"/>
</dbReference>
<dbReference type="PROSITE" id="PS50011">
    <property type="entry name" value="PROTEIN_KINASE_DOM"/>
    <property type="match status" value="1"/>
</dbReference>
<dbReference type="PROSITE" id="PS00108">
    <property type="entry name" value="PROTEIN_KINASE_ST"/>
    <property type="match status" value="1"/>
</dbReference>
<organism>
    <name type="scientific">Chaetomium globosum (strain ATCC 6205 / CBS 148.51 / DSM 1962 / NBRC 6347 / NRRL 1970)</name>
    <name type="common">Soil fungus</name>
    <dbReference type="NCBI Taxonomy" id="306901"/>
    <lineage>
        <taxon>Eukaryota</taxon>
        <taxon>Fungi</taxon>
        <taxon>Dikarya</taxon>
        <taxon>Ascomycota</taxon>
        <taxon>Pezizomycotina</taxon>
        <taxon>Sordariomycetes</taxon>
        <taxon>Sordariomycetidae</taxon>
        <taxon>Sordariales</taxon>
        <taxon>Chaetomiaceae</taxon>
        <taxon>Chaetomium</taxon>
    </lineage>
</organism>
<feature type="chain" id="PRO_0000312940" description="Serine/threonine-protein kinase SSN3">
    <location>
        <begin position="1"/>
        <end position="512"/>
    </location>
</feature>
<feature type="domain" description="Protein kinase" evidence="2">
    <location>
        <begin position="106"/>
        <end position="455"/>
    </location>
</feature>
<feature type="region of interest" description="Disordered" evidence="4">
    <location>
        <begin position="1"/>
        <end position="22"/>
    </location>
</feature>
<feature type="region of interest" description="Disordered" evidence="4">
    <location>
        <begin position="75"/>
        <end position="94"/>
    </location>
</feature>
<feature type="region of interest" description="Disordered" evidence="4">
    <location>
        <begin position="368"/>
        <end position="388"/>
    </location>
</feature>
<feature type="region of interest" description="Disordered" evidence="4">
    <location>
        <begin position="476"/>
        <end position="512"/>
    </location>
</feature>
<feature type="compositionally biased region" description="Basic residues" evidence="4">
    <location>
        <begin position="373"/>
        <end position="382"/>
    </location>
</feature>
<feature type="compositionally biased region" description="Basic and acidic residues" evidence="4">
    <location>
        <begin position="476"/>
        <end position="485"/>
    </location>
</feature>
<feature type="compositionally biased region" description="Basic and acidic residues" evidence="4">
    <location>
        <begin position="497"/>
        <end position="512"/>
    </location>
</feature>
<feature type="active site" description="Proton acceptor" evidence="2 3">
    <location>
        <position position="238"/>
    </location>
</feature>
<feature type="binding site" evidence="2">
    <location>
        <begin position="112"/>
        <end position="120"/>
    </location>
    <ligand>
        <name>ATP</name>
        <dbReference type="ChEBI" id="CHEBI:30616"/>
    </ligand>
</feature>
<feature type="binding site" evidence="2">
    <location>
        <position position="136"/>
    </location>
    <ligand>
        <name>ATP</name>
        <dbReference type="ChEBI" id="CHEBI:30616"/>
    </ligand>
</feature>
<protein>
    <recommendedName>
        <fullName>Serine/threonine-protein kinase SSN3</fullName>
        <ecNumber>2.7.11.22</ecNumber>
        <ecNumber>2.7.11.23</ecNumber>
    </recommendedName>
    <alternativeName>
        <fullName>Cyclin-dependent kinase 8</fullName>
    </alternativeName>
</protein>
<keyword id="KW-0010">Activator</keyword>
<keyword id="KW-0067">ATP-binding</keyword>
<keyword id="KW-0418">Kinase</keyword>
<keyword id="KW-0460">Magnesium</keyword>
<keyword id="KW-0479">Metal-binding</keyword>
<keyword id="KW-0547">Nucleotide-binding</keyword>
<keyword id="KW-0539">Nucleus</keyword>
<keyword id="KW-1185">Reference proteome</keyword>
<keyword id="KW-0678">Repressor</keyword>
<keyword id="KW-0723">Serine/threonine-protein kinase</keyword>
<keyword id="KW-0804">Transcription</keyword>
<keyword id="KW-0805">Transcription regulation</keyword>
<keyword id="KW-0808">Transferase</keyword>
<evidence type="ECO:0000250" key="1"/>
<evidence type="ECO:0000255" key="2">
    <source>
        <dbReference type="PROSITE-ProRule" id="PRU00159"/>
    </source>
</evidence>
<evidence type="ECO:0000255" key="3">
    <source>
        <dbReference type="PROSITE-ProRule" id="PRU10027"/>
    </source>
</evidence>
<evidence type="ECO:0000256" key="4">
    <source>
        <dbReference type="SAM" id="MobiDB-lite"/>
    </source>
</evidence>
<evidence type="ECO:0000305" key="5"/>
<comment type="function">
    <text evidence="1">Component of the SRB8-11 complex. The SRB8-11 complex is a regulatory module of the Mediator complex which is itself involved in regulation of basal and activated RNA polymerase II-dependent transcription. The SRB8-11 complex may be involved in the transcriptional repression of a subset of genes regulated by Mediator. It may inhibit the association of the Mediator complex with RNA polymerase II to form the holoenzyme complex. The SRB8-11 complex phosphorylates the C-terminal domain (CTD) of the largest subunit of RNA polymerase II (By similarity).</text>
</comment>
<comment type="catalytic activity">
    <reaction>
        <text>L-seryl-[protein] + ATP = O-phospho-L-seryl-[protein] + ADP + H(+)</text>
        <dbReference type="Rhea" id="RHEA:17989"/>
        <dbReference type="Rhea" id="RHEA-COMP:9863"/>
        <dbReference type="Rhea" id="RHEA-COMP:11604"/>
        <dbReference type="ChEBI" id="CHEBI:15378"/>
        <dbReference type="ChEBI" id="CHEBI:29999"/>
        <dbReference type="ChEBI" id="CHEBI:30616"/>
        <dbReference type="ChEBI" id="CHEBI:83421"/>
        <dbReference type="ChEBI" id="CHEBI:456216"/>
        <dbReference type="EC" id="2.7.11.22"/>
    </reaction>
</comment>
<comment type="catalytic activity">
    <reaction>
        <text>L-threonyl-[protein] + ATP = O-phospho-L-threonyl-[protein] + ADP + H(+)</text>
        <dbReference type="Rhea" id="RHEA:46608"/>
        <dbReference type="Rhea" id="RHEA-COMP:11060"/>
        <dbReference type="Rhea" id="RHEA-COMP:11605"/>
        <dbReference type="ChEBI" id="CHEBI:15378"/>
        <dbReference type="ChEBI" id="CHEBI:30013"/>
        <dbReference type="ChEBI" id="CHEBI:30616"/>
        <dbReference type="ChEBI" id="CHEBI:61977"/>
        <dbReference type="ChEBI" id="CHEBI:456216"/>
        <dbReference type="EC" id="2.7.11.22"/>
    </reaction>
</comment>
<comment type="catalytic activity">
    <reaction>
        <text>[DNA-directed RNA polymerase] + ATP = phospho-[DNA-directed RNA polymerase] + ADP + H(+)</text>
        <dbReference type="Rhea" id="RHEA:10216"/>
        <dbReference type="Rhea" id="RHEA-COMP:11321"/>
        <dbReference type="Rhea" id="RHEA-COMP:11322"/>
        <dbReference type="ChEBI" id="CHEBI:15378"/>
        <dbReference type="ChEBI" id="CHEBI:30616"/>
        <dbReference type="ChEBI" id="CHEBI:43176"/>
        <dbReference type="ChEBI" id="CHEBI:68546"/>
        <dbReference type="ChEBI" id="CHEBI:456216"/>
        <dbReference type="EC" id="2.7.11.23"/>
    </reaction>
</comment>
<comment type="cofactor">
    <cofactor evidence="1">
        <name>Mg(2+)</name>
        <dbReference type="ChEBI" id="CHEBI:18420"/>
    </cofactor>
</comment>
<comment type="subunit">
    <text evidence="1">Component of the SRB8-11 complex, a regulatory module of the Mediator complex.</text>
</comment>
<comment type="subcellular location">
    <subcellularLocation>
        <location evidence="5">Nucleus</location>
    </subcellularLocation>
</comment>
<comment type="similarity">
    <text evidence="5">Belongs to the protein kinase superfamily. CMGC Ser/Thr protein kinase family. CDC2/CDKX subfamily.</text>
</comment>
<gene>
    <name type="primary">SSN3</name>
    <name type="synonym">CDK8</name>
    <name type="ORF">CHGG_06845</name>
</gene>
<sequence length="512" mass="56984">MNNHYHPTGHRDAKTYAGDRPWPQWPGVPSGLSSSSGLLQNRYYAPAGPFPLLPYFGELGAGPDTAMNQAKRQRAEVSYQQPRPYPTGRGTGSMGYQSKVRVTDKYKVVGFISSGTYGRVYKALGRHGQPGEFAIKKFKPDKEGEQASYTGISQSAVREMALCSELHHPNVIRLVEIILEDKCIFMVFEYAEHDLLQIIHHHTQQPRHPIPPNTIKSIMFQLLNGCQYLHTNWVLHRDLKPANIMVTSSGEVKIGDLGLARLSYKPLHSLYGGDKVVVTIWYRAPELLLGSRHYTPAIDMWALGCIFAELLSLRPIFKGEEAKMDSKKTVPFQRNQMQKIVDIMGLPTKERWPLLTSTTEYSQLSTLQPPIHHGGHHGHHYQSQRQAAAANAGVSHLEKWYYNTINQQTGGSGPGSGTSPLASLGAEGYKLLAGLLEYDPQRRLTAAAALQHPFFSTGDPVSANCFEGLKTEYPHRRVSQDDNDIRTSSLPGTKRSGLPDDSLRPGKRVKEG</sequence>
<proteinExistence type="inferred from homology"/>
<reference key="1">
    <citation type="journal article" date="2015" name="Genome Announc.">
        <title>Draft genome sequence of the cellulolytic fungus Chaetomium globosum.</title>
        <authorList>
            <person name="Cuomo C.A."/>
            <person name="Untereiner W.A."/>
            <person name="Ma L.-J."/>
            <person name="Grabherr M."/>
            <person name="Birren B.W."/>
        </authorList>
    </citation>
    <scope>NUCLEOTIDE SEQUENCE [LARGE SCALE GENOMIC DNA]</scope>
    <source>
        <strain>ATCC 6205 / CBS 148.51 / DSM 1962 / NBRC 6347 / NRRL 1970</strain>
    </source>
</reference>
<accession>Q2GYV9</accession>
<name>SSN3_CHAGB</name>